<reference key="1">
    <citation type="submission" date="2007-12" db="EMBL/GenBank/DDBJ databases">
        <authorList>
            <consortium name="NIH - Xenopus Gene Collection (XGC) project"/>
        </authorList>
    </citation>
    <scope>NUCLEOTIDE SEQUENCE [LARGE SCALE MRNA]</scope>
    <source>
        <tissue>Embryo</tissue>
        <tissue>Neurula</tissue>
    </source>
</reference>
<name>SWI5_XENTR</name>
<keyword id="KW-0175">Coiled coil</keyword>
<keyword id="KW-0227">DNA damage</keyword>
<keyword id="KW-0234">DNA repair</keyword>
<keyword id="KW-0539">Nucleus</keyword>
<keyword id="KW-1185">Reference proteome</keyword>
<protein>
    <recommendedName>
        <fullName>DNA repair protein SWI5 homolog</fullName>
    </recommendedName>
    <alternativeName>
        <fullName>Protein SAE3 homolog</fullName>
    </alternativeName>
</protein>
<evidence type="ECO:0000250" key="1"/>
<evidence type="ECO:0000255" key="2"/>
<evidence type="ECO:0000256" key="3">
    <source>
        <dbReference type="SAM" id="MobiDB-lite"/>
    </source>
</evidence>
<evidence type="ECO:0000305" key="4"/>
<accession>A9UL70</accession>
<accession>B7ZUG6</accession>
<feature type="chain" id="PRO_0000324587" description="DNA repair protein SWI5 homolog">
    <location>
        <begin position="1"/>
        <end position="105"/>
    </location>
</feature>
<feature type="region of interest" description="Disordered" evidence="3">
    <location>
        <begin position="1"/>
        <end position="31"/>
    </location>
</feature>
<feature type="coiled-coil region" evidence="2">
    <location>
        <begin position="28"/>
        <end position="54"/>
    </location>
</feature>
<feature type="compositionally biased region" description="Low complexity" evidence="3">
    <location>
        <begin position="11"/>
        <end position="28"/>
    </location>
</feature>
<feature type="sequence conflict" description="In Ref. 1; AAI57144." evidence="4" ref="1">
    <original>N</original>
    <variation>K</variation>
    <location>
        <position position="6"/>
    </location>
</feature>
<feature type="sequence conflict" description="In Ref. 1; AAI57144." evidence="4" ref="1">
    <original>A</original>
    <variation>V</variation>
    <location>
        <position position="97"/>
    </location>
</feature>
<comment type="function">
    <text evidence="1">Component of the swi5-sfr1 complex, a complex required for double-strand break repair via homologous recombination.</text>
</comment>
<comment type="subunit">
    <text evidence="1">Component of the swi5-sfr1 complex.</text>
</comment>
<comment type="subcellular location">
    <subcellularLocation>
        <location evidence="1">Nucleus</location>
    </subcellularLocation>
</comment>
<comment type="similarity">
    <text evidence="4">Belongs to the SWI5/SAE3 family.</text>
</comment>
<sequence length="105" mass="11640">MRRNCNAGFKSPVQSPSSSSSGRGSEYSLQKEVSELQGKEAALDQEIAQLESEGFSMAELEEHITLLHEYNELKDVGQMLLGRLAVLRGVTTKELYAEFGMNLED</sequence>
<dbReference type="EMBL" id="BC157143">
    <property type="protein sequence ID" value="AAI57144.1"/>
    <property type="molecule type" value="mRNA"/>
</dbReference>
<dbReference type="EMBL" id="BC171224">
    <property type="protein sequence ID" value="AAI71224.1"/>
    <property type="molecule type" value="mRNA"/>
</dbReference>
<dbReference type="EMBL" id="BC171226">
    <property type="protein sequence ID" value="AAI71226.1"/>
    <property type="molecule type" value="mRNA"/>
</dbReference>
<dbReference type="RefSeq" id="NP_001107337.1">
    <property type="nucleotide sequence ID" value="NM_001113865.1"/>
</dbReference>
<dbReference type="SMR" id="A9UL70"/>
<dbReference type="STRING" id="8364.ENSXETP00000027433"/>
<dbReference type="PaxDb" id="8364-ENSXETP00000015579"/>
<dbReference type="GeneID" id="100135158"/>
<dbReference type="KEGG" id="xtr:100135158"/>
<dbReference type="CTD" id="375757"/>
<dbReference type="eggNOG" id="ENOG502S8Z3">
    <property type="taxonomic scope" value="Eukaryota"/>
</dbReference>
<dbReference type="HOGENOM" id="CLU_2533474_0_0_1"/>
<dbReference type="InParanoid" id="A9UL70"/>
<dbReference type="OrthoDB" id="255837at2759"/>
<dbReference type="Proteomes" id="UP000008143">
    <property type="component" value="Chromosome 8"/>
</dbReference>
<dbReference type="Bgee" id="ENSXETG00000007174">
    <property type="expression patterns" value="Expressed in testis and 12 other cell types or tissues"/>
</dbReference>
<dbReference type="ExpressionAtlas" id="A9UL70">
    <property type="expression patterns" value="baseline"/>
</dbReference>
<dbReference type="GO" id="GO:0005634">
    <property type="term" value="C:nucleus"/>
    <property type="evidence" value="ECO:0000250"/>
    <property type="project" value="UniProtKB"/>
</dbReference>
<dbReference type="GO" id="GO:0032798">
    <property type="term" value="C:Swi5-Sfr1 complex"/>
    <property type="evidence" value="ECO:0000250"/>
    <property type="project" value="UniProtKB"/>
</dbReference>
<dbReference type="GO" id="GO:0000724">
    <property type="term" value="P:double-strand break repair via homologous recombination"/>
    <property type="evidence" value="ECO:0000250"/>
    <property type="project" value="UniProtKB"/>
</dbReference>
<dbReference type="FunFam" id="1.20.5.170:FF:000056">
    <property type="entry name" value="DNA repair protein SWI5 homolog"/>
    <property type="match status" value="1"/>
</dbReference>
<dbReference type="Gene3D" id="1.20.5.170">
    <property type="match status" value="1"/>
</dbReference>
<dbReference type="InterPro" id="IPR010760">
    <property type="entry name" value="DNA-repair_Swi5"/>
</dbReference>
<dbReference type="PANTHER" id="PTHR28529">
    <property type="entry name" value="DNA REPAIR PROTEIN SWI5 HOMOLOG"/>
    <property type="match status" value="1"/>
</dbReference>
<dbReference type="PANTHER" id="PTHR28529:SF2">
    <property type="entry name" value="DNA REPAIR PROTEIN SWI5 HOMOLOG"/>
    <property type="match status" value="1"/>
</dbReference>
<dbReference type="Pfam" id="PF07061">
    <property type="entry name" value="Swi5"/>
    <property type="match status" value="1"/>
</dbReference>
<proteinExistence type="inferred from homology"/>
<organism>
    <name type="scientific">Xenopus tropicalis</name>
    <name type="common">Western clawed frog</name>
    <name type="synonym">Silurana tropicalis</name>
    <dbReference type="NCBI Taxonomy" id="8364"/>
    <lineage>
        <taxon>Eukaryota</taxon>
        <taxon>Metazoa</taxon>
        <taxon>Chordata</taxon>
        <taxon>Craniata</taxon>
        <taxon>Vertebrata</taxon>
        <taxon>Euteleostomi</taxon>
        <taxon>Amphibia</taxon>
        <taxon>Batrachia</taxon>
        <taxon>Anura</taxon>
        <taxon>Pipoidea</taxon>
        <taxon>Pipidae</taxon>
        <taxon>Xenopodinae</taxon>
        <taxon>Xenopus</taxon>
        <taxon>Silurana</taxon>
    </lineage>
</organism>
<gene>
    <name type="primary">swi5</name>
    <name type="synonym">sae3</name>
</gene>